<keyword id="KW-0012">Acyltransferase</keyword>
<keyword id="KW-0133">Cell shape</keyword>
<keyword id="KW-0961">Cell wall biogenesis/degradation</keyword>
<keyword id="KW-0963">Cytoplasm</keyword>
<keyword id="KW-0460">Magnesium</keyword>
<keyword id="KW-0479">Metal-binding</keyword>
<keyword id="KW-0511">Multifunctional enzyme</keyword>
<keyword id="KW-0548">Nucleotidyltransferase</keyword>
<keyword id="KW-0573">Peptidoglycan synthesis</keyword>
<keyword id="KW-1185">Reference proteome</keyword>
<keyword id="KW-0677">Repeat</keyword>
<keyword id="KW-0808">Transferase</keyword>
<feature type="chain" id="PRO_0000233736" description="Bifunctional protein GlmU">
    <location>
        <begin position="1"/>
        <end position="458"/>
    </location>
</feature>
<feature type="region of interest" description="Pyrophosphorylase" evidence="1">
    <location>
        <begin position="1"/>
        <end position="224"/>
    </location>
</feature>
<feature type="region of interest" description="Linker" evidence="1">
    <location>
        <begin position="225"/>
        <end position="245"/>
    </location>
</feature>
<feature type="region of interest" description="N-acetyltransferase" evidence="1">
    <location>
        <begin position="246"/>
        <end position="458"/>
    </location>
</feature>
<feature type="active site" description="Proton acceptor" evidence="1">
    <location>
        <position position="358"/>
    </location>
</feature>
<feature type="binding site" evidence="1">
    <location>
        <begin position="6"/>
        <end position="9"/>
    </location>
    <ligand>
        <name>UDP-N-acetyl-alpha-D-glucosamine</name>
        <dbReference type="ChEBI" id="CHEBI:57705"/>
    </ligand>
</feature>
<feature type="binding site" evidence="1">
    <location>
        <position position="20"/>
    </location>
    <ligand>
        <name>UDP-N-acetyl-alpha-D-glucosamine</name>
        <dbReference type="ChEBI" id="CHEBI:57705"/>
    </ligand>
</feature>
<feature type="binding site" evidence="1">
    <location>
        <position position="71"/>
    </location>
    <ligand>
        <name>UDP-N-acetyl-alpha-D-glucosamine</name>
        <dbReference type="ChEBI" id="CHEBI:57705"/>
    </ligand>
</feature>
<feature type="binding site" evidence="1">
    <location>
        <begin position="76"/>
        <end position="77"/>
    </location>
    <ligand>
        <name>UDP-N-acetyl-alpha-D-glucosamine</name>
        <dbReference type="ChEBI" id="CHEBI:57705"/>
    </ligand>
</feature>
<feature type="binding site" evidence="1">
    <location>
        <position position="99"/>
    </location>
    <ligand>
        <name>Mg(2+)</name>
        <dbReference type="ChEBI" id="CHEBI:18420"/>
    </ligand>
</feature>
<feature type="binding site" evidence="1">
    <location>
        <position position="136"/>
    </location>
    <ligand>
        <name>UDP-N-acetyl-alpha-D-glucosamine</name>
        <dbReference type="ChEBI" id="CHEBI:57705"/>
    </ligand>
</feature>
<feature type="binding site" evidence="1">
    <location>
        <position position="150"/>
    </location>
    <ligand>
        <name>UDP-N-acetyl-alpha-D-glucosamine</name>
        <dbReference type="ChEBI" id="CHEBI:57705"/>
    </ligand>
</feature>
<feature type="binding site" evidence="1">
    <location>
        <position position="165"/>
    </location>
    <ligand>
        <name>UDP-N-acetyl-alpha-D-glucosamine</name>
        <dbReference type="ChEBI" id="CHEBI:57705"/>
    </ligand>
</feature>
<feature type="binding site" evidence="1">
    <location>
        <position position="222"/>
    </location>
    <ligand>
        <name>Mg(2+)</name>
        <dbReference type="ChEBI" id="CHEBI:18420"/>
    </ligand>
</feature>
<feature type="binding site" evidence="1">
    <location>
        <position position="222"/>
    </location>
    <ligand>
        <name>UDP-N-acetyl-alpha-D-glucosamine</name>
        <dbReference type="ChEBI" id="CHEBI:57705"/>
    </ligand>
</feature>
<feature type="binding site" evidence="1">
    <location>
        <position position="328"/>
    </location>
    <ligand>
        <name>UDP-N-acetyl-alpha-D-glucosamine</name>
        <dbReference type="ChEBI" id="CHEBI:57705"/>
    </ligand>
</feature>
<feature type="binding site" evidence="1">
    <location>
        <position position="346"/>
    </location>
    <ligand>
        <name>UDP-N-acetyl-alpha-D-glucosamine</name>
        <dbReference type="ChEBI" id="CHEBI:57705"/>
    </ligand>
</feature>
<feature type="binding site" evidence="1">
    <location>
        <position position="361"/>
    </location>
    <ligand>
        <name>UDP-N-acetyl-alpha-D-glucosamine</name>
        <dbReference type="ChEBI" id="CHEBI:57705"/>
    </ligand>
</feature>
<feature type="binding site" evidence="1">
    <location>
        <position position="372"/>
    </location>
    <ligand>
        <name>UDP-N-acetyl-alpha-D-glucosamine</name>
        <dbReference type="ChEBI" id="CHEBI:57705"/>
    </ligand>
</feature>
<feature type="binding site" evidence="1">
    <location>
        <begin position="381"/>
        <end position="382"/>
    </location>
    <ligand>
        <name>acetyl-CoA</name>
        <dbReference type="ChEBI" id="CHEBI:57288"/>
    </ligand>
</feature>
<feature type="binding site" evidence="1">
    <location>
        <position position="401"/>
    </location>
    <ligand>
        <name>acetyl-CoA</name>
        <dbReference type="ChEBI" id="CHEBI:57288"/>
    </ligand>
</feature>
<feature type="binding site" evidence="1">
    <location>
        <position position="419"/>
    </location>
    <ligand>
        <name>acetyl-CoA</name>
        <dbReference type="ChEBI" id="CHEBI:57288"/>
    </ligand>
</feature>
<feature type="binding site" evidence="1">
    <location>
        <position position="436"/>
    </location>
    <ligand>
        <name>acetyl-CoA</name>
        <dbReference type="ChEBI" id="CHEBI:57288"/>
    </ligand>
</feature>
<protein>
    <recommendedName>
        <fullName evidence="1">Bifunctional protein GlmU</fullName>
    </recommendedName>
    <domain>
        <recommendedName>
            <fullName evidence="1">UDP-N-acetylglucosamine pyrophosphorylase</fullName>
            <ecNumber evidence="1">2.7.7.23</ecNumber>
        </recommendedName>
        <alternativeName>
            <fullName evidence="1">N-acetylglucosamine-1-phosphate uridyltransferase</fullName>
        </alternativeName>
    </domain>
    <domain>
        <recommendedName>
            <fullName evidence="1">Glucosamine-1-phosphate N-acetyltransferase</fullName>
            <ecNumber evidence="1">2.3.1.157</ecNumber>
        </recommendedName>
    </domain>
</protein>
<dbReference type="EC" id="2.7.7.23" evidence="1"/>
<dbReference type="EC" id="2.3.1.157" evidence="1"/>
<dbReference type="EMBL" id="BX842655">
    <property type="protein sequence ID" value="CAE78223.1"/>
    <property type="status" value="ALT_INIT"/>
    <property type="molecule type" value="Genomic_DNA"/>
</dbReference>
<dbReference type="RefSeq" id="WP_011165761.1">
    <property type="nucleotide sequence ID" value="NC_005363.1"/>
</dbReference>
<dbReference type="SMR" id="Q6MHV9"/>
<dbReference type="STRING" id="264462.Bd3425"/>
<dbReference type="GeneID" id="93014241"/>
<dbReference type="KEGG" id="bba:Bd3425"/>
<dbReference type="eggNOG" id="COG1207">
    <property type="taxonomic scope" value="Bacteria"/>
</dbReference>
<dbReference type="HOGENOM" id="CLU_029499_15_2_7"/>
<dbReference type="UniPathway" id="UPA00113">
    <property type="reaction ID" value="UER00532"/>
</dbReference>
<dbReference type="UniPathway" id="UPA00113">
    <property type="reaction ID" value="UER00533"/>
</dbReference>
<dbReference type="UniPathway" id="UPA00973"/>
<dbReference type="Proteomes" id="UP000008080">
    <property type="component" value="Chromosome"/>
</dbReference>
<dbReference type="GO" id="GO:0005737">
    <property type="term" value="C:cytoplasm"/>
    <property type="evidence" value="ECO:0007669"/>
    <property type="project" value="UniProtKB-SubCell"/>
</dbReference>
<dbReference type="GO" id="GO:0016020">
    <property type="term" value="C:membrane"/>
    <property type="evidence" value="ECO:0007669"/>
    <property type="project" value="GOC"/>
</dbReference>
<dbReference type="GO" id="GO:0019134">
    <property type="term" value="F:glucosamine-1-phosphate N-acetyltransferase activity"/>
    <property type="evidence" value="ECO:0007669"/>
    <property type="project" value="UniProtKB-UniRule"/>
</dbReference>
<dbReference type="GO" id="GO:0000287">
    <property type="term" value="F:magnesium ion binding"/>
    <property type="evidence" value="ECO:0007669"/>
    <property type="project" value="UniProtKB-UniRule"/>
</dbReference>
<dbReference type="GO" id="GO:0003977">
    <property type="term" value="F:UDP-N-acetylglucosamine diphosphorylase activity"/>
    <property type="evidence" value="ECO:0007669"/>
    <property type="project" value="UniProtKB-UniRule"/>
</dbReference>
<dbReference type="GO" id="GO:0000902">
    <property type="term" value="P:cell morphogenesis"/>
    <property type="evidence" value="ECO:0007669"/>
    <property type="project" value="UniProtKB-UniRule"/>
</dbReference>
<dbReference type="GO" id="GO:0071555">
    <property type="term" value="P:cell wall organization"/>
    <property type="evidence" value="ECO:0007669"/>
    <property type="project" value="UniProtKB-KW"/>
</dbReference>
<dbReference type="GO" id="GO:0009245">
    <property type="term" value="P:lipid A biosynthetic process"/>
    <property type="evidence" value="ECO:0007669"/>
    <property type="project" value="UniProtKB-UniRule"/>
</dbReference>
<dbReference type="GO" id="GO:0009252">
    <property type="term" value="P:peptidoglycan biosynthetic process"/>
    <property type="evidence" value="ECO:0007669"/>
    <property type="project" value="UniProtKB-UniRule"/>
</dbReference>
<dbReference type="GO" id="GO:0008360">
    <property type="term" value="P:regulation of cell shape"/>
    <property type="evidence" value="ECO:0007669"/>
    <property type="project" value="UniProtKB-KW"/>
</dbReference>
<dbReference type="GO" id="GO:0006048">
    <property type="term" value="P:UDP-N-acetylglucosamine biosynthetic process"/>
    <property type="evidence" value="ECO:0007669"/>
    <property type="project" value="UniProtKB-UniPathway"/>
</dbReference>
<dbReference type="CDD" id="cd02540">
    <property type="entry name" value="GT2_GlmU_N_bac"/>
    <property type="match status" value="1"/>
</dbReference>
<dbReference type="CDD" id="cd03353">
    <property type="entry name" value="LbH_GlmU_C"/>
    <property type="match status" value="1"/>
</dbReference>
<dbReference type="Gene3D" id="2.160.10.10">
    <property type="entry name" value="Hexapeptide repeat proteins"/>
    <property type="match status" value="1"/>
</dbReference>
<dbReference type="Gene3D" id="3.90.550.10">
    <property type="entry name" value="Spore Coat Polysaccharide Biosynthesis Protein SpsA, Chain A"/>
    <property type="match status" value="1"/>
</dbReference>
<dbReference type="HAMAP" id="MF_01631">
    <property type="entry name" value="GlmU"/>
    <property type="match status" value="1"/>
</dbReference>
<dbReference type="InterPro" id="IPR005882">
    <property type="entry name" value="Bifunctional_GlmU"/>
</dbReference>
<dbReference type="InterPro" id="IPR050065">
    <property type="entry name" value="GlmU-like"/>
</dbReference>
<dbReference type="InterPro" id="IPR038009">
    <property type="entry name" value="GlmU_C_LbH"/>
</dbReference>
<dbReference type="InterPro" id="IPR001451">
    <property type="entry name" value="Hexapep"/>
</dbReference>
<dbReference type="InterPro" id="IPR025877">
    <property type="entry name" value="MobA-like_NTP_Trfase"/>
</dbReference>
<dbReference type="InterPro" id="IPR029044">
    <property type="entry name" value="Nucleotide-diphossugar_trans"/>
</dbReference>
<dbReference type="InterPro" id="IPR011004">
    <property type="entry name" value="Trimer_LpxA-like_sf"/>
</dbReference>
<dbReference type="NCBIfam" id="TIGR01173">
    <property type="entry name" value="glmU"/>
    <property type="match status" value="1"/>
</dbReference>
<dbReference type="PANTHER" id="PTHR43584:SF3">
    <property type="entry name" value="BIFUNCTIONAL PROTEIN GLMU"/>
    <property type="match status" value="1"/>
</dbReference>
<dbReference type="PANTHER" id="PTHR43584">
    <property type="entry name" value="NUCLEOTIDYL TRANSFERASE"/>
    <property type="match status" value="1"/>
</dbReference>
<dbReference type="Pfam" id="PF00132">
    <property type="entry name" value="Hexapep"/>
    <property type="match status" value="1"/>
</dbReference>
<dbReference type="Pfam" id="PF12804">
    <property type="entry name" value="NTP_transf_3"/>
    <property type="match status" value="1"/>
</dbReference>
<dbReference type="SUPFAM" id="SSF53448">
    <property type="entry name" value="Nucleotide-diphospho-sugar transferases"/>
    <property type="match status" value="1"/>
</dbReference>
<dbReference type="SUPFAM" id="SSF51161">
    <property type="entry name" value="Trimeric LpxA-like enzymes"/>
    <property type="match status" value="1"/>
</dbReference>
<accession>Q6MHV9</accession>
<organism>
    <name type="scientific">Bdellovibrio bacteriovorus (strain ATCC 15356 / DSM 50701 / NCIMB 9529 / HD100)</name>
    <dbReference type="NCBI Taxonomy" id="264462"/>
    <lineage>
        <taxon>Bacteria</taxon>
        <taxon>Pseudomonadati</taxon>
        <taxon>Bdellovibrionota</taxon>
        <taxon>Bdellovibrionia</taxon>
        <taxon>Bdellovibrionales</taxon>
        <taxon>Pseudobdellovibrionaceae</taxon>
        <taxon>Bdellovibrio</taxon>
    </lineage>
</organism>
<sequence length="458" mass="49815">MTVIALAAGKGTRMKSPLPKVLHPVAGRPMIEKVIQASKQAGAAEVRVIVGHGQNLVRQVVEPMGVACYVQDEQLGTAHAVRCAKPETIEGVVVIMNGDHPLIEASDIKDFVRIFRDEKCDLAVVTAVLKNPGEFGRIVRHKGDLAAIVEAKDASAEALKIREINTGIYIVKASVLSEYLPQISNNNAKKEYYITDLIALCIQDKCRVQAIQSTPKVAVGVNNQLELARATRLLFKRKALRLMEDGVLMIDPRTVYVEESVEIGAGTVIYPNVFIRGRTKIGSFTVIESNAFISDCEIGDSVQIRGGSYLESSKLHNKVSAGPYARLRPETEIFEEAHVGNFVEMKKVKFGKKSKAGHLTYLGDAEIGEEVNVGCGTITCNYAADKKKYKTKIGNRVFVGSDTQFVAPIEVGDDAIIGSGSTITKNVPAKALAVARGKQFIKENYSAKTAETEEKEQV</sequence>
<proteinExistence type="inferred from homology"/>
<name>GLMU_BDEBA</name>
<comment type="function">
    <text evidence="1">Catalyzes the last two sequential reactions in the de novo biosynthetic pathway for UDP-N-acetylglucosamine (UDP-GlcNAc). The C-terminal domain catalyzes the transfer of acetyl group from acetyl coenzyme A to glucosamine-1-phosphate (GlcN-1-P) to produce N-acetylglucosamine-1-phosphate (GlcNAc-1-P), which is converted into UDP-GlcNAc by the transfer of uridine 5-monophosphate (from uridine 5-triphosphate), a reaction catalyzed by the N-terminal domain.</text>
</comment>
<comment type="catalytic activity">
    <reaction evidence="1">
        <text>alpha-D-glucosamine 1-phosphate + acetyl-CoA = N-acetyl-alpha-D-glucosamine 1-phosphate + CoA + H(+)</text>
        <dbReference type="Rhea" id="RHEA:13725"/>
        <dbReference type="ChEBI" id="CHEBI:15378"/>
        <dbReference type="ChEBI" id="CHEBI:57287"/>
        <dbReference type="ChEBI" id="CHEBI:57288"/>
        <dbReference type="ChEBI" id="CHEBI:57776"/>
        <dbReference type="ChEBI" id="CHEBI:58516"/>
        <dbReference type="EC" id="2.3.1.157"/>
    </reaction>
</comment>
<comment type="catalytic activity">
    <reaction evidence="1">
        <text>N-acetyl-alpha-D-glucosamine 1-phosphate + UTP + H(+) = UDP-N-acetyl-alpha-D-glucosamine + diphosphate</text>
        <dbReference type="Rhea" id="RHEA:13509"/>
        <dbReference type="ChEBI" id="CHEBI:15378"/>
        <dbReference type="ChEBI" id="CHEBI:33019"/>
        <dbReference type="ChEBI" id="CHEBI:46398"/>
        <dbReference type="ChEBI" id="CHEBI:57705"/>
        <dbReference type="ChEBI" id="CHEBI:57776"/>
        <dbReference type="EC" id="2.7.7.23"/>
    </reaction>
</comment>
<comment type="cofactor">
    <cofactor evidence="1">
        <name>Mg(2+)</name>
        <dbReference type="ChEBI" id="CHEBI:18420"/>
    </cofactor>
    <text evidence="1">Binds 1 Mg(2+) ion per subunit.</text>
</comment>
<comment type="pathway">
    <text evidence="1">Nucleotide-sugar biosynthesis; UDP-N-acetyl-alpha-D-glucosamine biosynthesis; N-acetyl-alpha-D-glucosamine 1-phosphate from alpha-D-glucosamine 6-phosphate (route II): step 2/2.</text>
</comment>
<comment type="pathway">
    <text evidence="1">Nucleotide-sugar biosynthesis; UDP-N-acetyl-alpha-D-glucosamine biosynthesis; UDP-N-acetyl-alpha-D-glucosamine from N-acetyl-alpha-D-glucosamine 1-phosphate: step 1/1.</text>
</comment>
<comment type="pathway">
    <text evidence="1">Bacterial outer membrane biogenesis; LPS lipid A biosynthesis.</text>
</comment>
<comment type="subunit">
    <text evidence="1">Homotrimer.</text>
</comment>
<comment type="subcellular location">
    <subcellularLocation>
        <location evidence="1">Cytoplasm</location>
    </subcellularLocation>
</comment>
<comment type="similarity">
    <text evidence="1">In the N-terminal section; belongs to the N-acetylglucosamine-1-phosphate uridyltransferase family.</text>
</comment>
<comment type="similarity">
    <text evidence="1">In the C-terminal section; belongs to the transferase hexapeptide repeat family.</text>
</comment>
<comment type="sequence caution" evidence="2">
    <conflict type="erroneous initiation">
        <sequence resource="EMBL-CDS" id="CAE78223"/>
    </conflict>
    <text>Extended N-terminus.</text>
</comment>
<reference key="1">
    <citation type="journal article" date="2004" name="Science">
        <title>A predator unmasked: life cycle of Bdellovibrio bacteriovorus from a genomic perspective.</title>
        <authorList>
            <person name="Rendulic S."/>
            <person name="Jagtap P."/>
            <person name="Rosinus A."/>
            <person name="Eppinger M."/>
            <person name="Baar C."/>
            <person name="Lanz C."/>
            <person name="Keller H."/>
            <person name="Lambert C."/>
            <person name="Evans K.J."/>
            <person name="Goesmann A."/>
            <person name="Meyer F."/>
            <person name="Sockett R.E."/>
            <person name="Schuster S.C."/>
        </authorList>
    </citation>
    <scope>NUCLEOTIDE SEQUENCE [LARGE SCALE GENOMIC DNA]</scope>
    <source>
        <strain>ATCC 15356 / DSM 50701 / NCIMB 9529 / HD100</strain>
    </source>
</reference>
<evidence type="ECO:0000255" key="1">
    <source>
        <dbReference type="HAMAP-Rule" id="MF_01631"/>
    </source>
</evidence>
<evidence type="ECO:0000305" key="2"/>
<gene>
    <name evidence="1" type="primary">glmU</name>
    <name type="ordered locus">Bd3425</name>
</gene>